<gene>
    <name type="primary">atpI</name>
    <name type="ordered locus">TC_0579</name>
</gene>
<dbReference type="EMBL" id="AE002160">
    <property type="protein sequence ID" value="AAF39414.1"/>
    <property type="molecule type" value="Genomic_DNA"/>
</dbReference>
<dbReference type="PIR" id="C81687">
    <property type="entry name" value="C81687"/>
</dbReference>
<dbReference type="RefSeq" id="WP_010230892.1">
    <property type="nucleotide sequence ID" value="NZ_CP063055.1"/>
</dbReference>
<dbReference type="SMR" id="Q9PK88"/>
<dbReference type="GeneID" id="1245938"/>
<dbReference type="KEGG" id="cmu:TC_0579"/>
<dbReference type="eggNOG" id="COG1269">
    <property type="taxonomic scope" value="Bacteria"/>
</dbReference>
<dbReference type="HOGENOM" id="CLU_025558_1_1_0"/>
<dbReference type="OrthoDB" id="9803814at2"/>
<dbReference type="Proteomes" id="UP000000800">
    <property type="component" value="Chromosome"/>
</dbReference>
<dbReference type="GO" id="GO:0005886">
    <property type="term" value="C:plasma membrane"/>
    <property type="evidence" value="ECO:0007669"/>
    <property type="project" value="UniProtKB-SubCell"/>
</dbReference>
<dbReference type="GO" id="GO:0033179">
    <property type="term" value="C:proton-transporting V-type ATPase, V0 domain"/>
    <property type="evidence" value="ECO:0007669"/>
    <property type="project" value="InterPro"/>
</dbReference>
<dbReference type="GO" id="GO:0016471">
    <property type="term" value="C:vacuolar proton-transporting V-type ATPase complex"/>
    <property type="evidence" value="ECO:0007669"/>
    <property type="project" value="TreeGrafter"/>
</dbReference>
<dbReference type="GO" id="GO:0051117">
    <property type="term" value="F:ATPase binding"/>
    <property type="evidence" value="ECO:0007669"/>
    <property type="project" value="TreeGrafter"/>
</dbReference>
<dbReference type="GO" id="GO:0046961">
    <property type="term" value="F:proton-transporting ATPase activity, rotational mechanism"/>
    <property type="evidence" value="ECO:0007669"/>
    <property type="project" value="InterPro"/>
</dbReference>
<dbReference type="GO" id="GO:0007035">
    <property type="term" value="P:vacuolar acidification"/>
    <property type="evidence" value="ECO:0007669"/>
    <property type="project" value="TreeGrafter"/>
</dbReference>
<dbReference type="InterPro" id="IPR002490">
    <property type="entry name" value="V-ATPase_116kDa_su"/>
</dbReference>
<dbReference type="NCBIfam" id="NF004431">
    <property type="entry name" value="PRK05771.2-5"/>
    <property type="match status" value="1"/>
</dbReference>
<dbReference type="PANTHER" id="PTHR11629:SF63">
    <property type="entry name" value="V-TYPE PROTON ATPASE SUBUNIT A"/>
    <property type="match status" value="1"/>
</dbReference>
<dbReference type="PANTHER" id="PTHR11629">
    <property type="entry name" value="VACUOLAR PROTON ATPASES"/>
    <property type="match status" value="1"/>
</dbReference>
<sequence>MRINVDKYLFIGRKKSEFFSACRELGAVEFLAKNKLKDSENVRRISEGLKTLNLLTNKYSPSDLVLVKSGYLTTEQLLQEIFDLNHEITTITDSLKALSKEIFRVKPLGNFSSEEIRELTLKTGLSVRFFYKKHIEGAPLEVEEENVFYLATAYNYDYYVVIGVVSLSKDIFTEIEAPRSVGELREEEEHLQTLLRKKKARVCELYAYREELLEALCEQCNEQTLQHAEASTEDLFDDKVFSALGWVIVDRLTEVEKLCNSLGVYLERVQPDPDEVIPTYLENHGLGALGESLVNIYDTPASTDKDPSLWVFLSFFVFFSMIINDAGYGLIFLATSLFLSFKARKQVKHSLALKRFLKMFMILGGGCVCWGGATTSFFGVSVSYTSPFREYSLTHFLAMKKAEYYLKERPKGYKELVHDYPVLKDKKTPKEFLLAQGTSSGDSVYKAVVYDKFTDNILMEIALLVGVVHLSLGMLRYCRQRYSSIGWVVFMCGAYMYLPIYLQAVSLIHYALHVPYELGGQVGYYVTFIGLGIAVLGGIIQRGLRGLDEVTAVIQVFSDVLSYLRLYALSLAGAMVGNTVMVMSERFSPAVGVLIIIFGHTVNIALSIMGGVIHGLRLNFIEWYHYSFDGGGRLLHPLKRVICQKSQNI</sequence>
<protein>
    <recommendedName>
        <fullName>V-type ATP synthase subunit I</fullName>
    </recommendedName>
    <alternativeName>
        <fullName>V-ATPase subunit I</fullName>
    </alternativeName>
</protein>
<reference key="1">
    <citation type="journal article" date="2000" name="Nucleic Acids Res.">
        <title>Genome sequences of Chlamydia trachomatis MoPn and Chlamydia pneumoniae AR39.</title>
        <authorList>
            <person name="Read T.D."/>
            <person name="Brunham R.C."/>
            <person name="Shen C."/>
            <person name="Gill S.R."/>
            <person name="Heidelberg J.F."/>
            <person name="White O."/>
            <person name="Hickey E.K."/>
            <person name="Peterson J.D."/>
            <person name="Utterback T.R."/>
            <person name="Berry K.J."/>
            <person name="Bass S."/>
            <person name="Linher K.D."/>
            <person name="Weidman J.F."/>
            <person name="Khouri H.M."/>
            <person name="Craven B."/>
            <person name="Bowman C."/>
            <person name="Dodson R.J."/>
            <person name="Gwinn M.L."/>
            <person name="Nelson W.C."/>
            <person name="DeBoy R.T."/>
            <person name="Kolonay J.F."/>
            <person name="McClarty G."/>
            <person name="Salzberg S.L."/>
            <person name="Eisen J.A."/>
            <person name="Fraser C.M."/>
        </authorList>
    </citation>
    <scope>NUCLEOTIDE SEQUENCE [LARGE SCALE GENOMIC DNA]</scope>
    <source>
        <strain>MoPn / Nigg</strain>
    </source>
</reference>
<organism>
    <name type="scientific">Chlamydia muridarum (strain MoPn / Nigg)</name>
    <dbReference type="NCBI Taxonomy" id="243161"/>
    <lineage>
        <taxon>Bacteria</taxon>
        <taxon>Pseudomonadati</taxon>
        <taxon>Chlamydiota</taxon>
        <taxon>Chlamydiia</taxon>
        <taxon>Chlamydiales</taxon>
        <taxon>Chlamydiaceae</taxon>
        <taxon>Chlamydia/Chlamydophila group</taxon>
        <taxon>Chlamydia</taxon>
    </lineage>
</organism>
<accession>Q9PK88</accession>
<name>VATI_CHLMU</name>
<feature type="chain" id="PRO_0000119238" description="V-type ATP synthase subunit I">
    <location>
        <begin position="1"/>
        <end position="649"/>
    </location>
</feature>
<feature type="transmembrane region" description="Helical" evidence="1">
    <location>
        <begin position="312"/>
        <end position="332"/>
    </location>
</feature>
<feature type="transmembrane region" description="Helical" evidence="1">
    <location>
        <begin position="360"/>
        <end position="380"/>
    </location>
</feature>
<feature type="transmembrane region" description="Helical" evidence="1">
    <location>
        <begin position="455"/>
        <end position="475"/>
    </location>
</feature>
<feature type="transmembrane region" description="Helical" evidence="1">
    <location>
        <begin position="485"/>
        <end position="505"/>
    </location>
</feature>
<feature type="transmembrane region" description="Helical" evidence="1">
    <location>
        <begin position="520"/>
        <end position="540"/>
    </location>
</feature>
<feature type="transmembrane region" description="Helical" evidence="1">
    <location>
        <begin position="556"/>
        <end position="576"/>
    </location>
</feature>
<feature type="transmembrane region" description="Helical" evidence="1">
    <location>
        <begin position="593"/>
        <end position="613"/>
    </location>
</feature>
<evidence type="ECO:0000255" key="1"/>
<evidence type="ECO:0000305" key="2"/>
<keyword id="KW-1003">Cell membrane</keyword>
<keyword id="KW-0375">Hydrogen ion transport</keyword>
<keyword id="KW-0406">Ion transport</keyword>
<keyword id="KW-0472">Membrane</keyword>
<keyword id="KW-0812">Transmembrane</keyword>
<keyword id="KW-1133">Transmembrane helix</keyword>
<keyword id="KW-0813">Transport</keyword>
<comment type="function">
    <text>Produces ATP from ADP in the presence of a proton gradient across the membrane.</text>
</comment>
<comment type="subcellular location">
    <subcellularLocation>
        <location evidence="2">Cell membrane</location>
        <topology evidence="2">Multi-pass membrane protein</topology>
    </subcellularLocation>
</comment>
<comment type="similarity">
    <text evidence="2">Belongs to the V-ATPase 116 kDa subunit family.</text>
</comment>
<proteinExistence type="inferred from homology"/>